<sequence length="573" mass="63370">MNQTRVFLIFAWLMVAALLWMEWGKDKAPANAPTPIASQAVPAARDPDAAAPAANVPSAQAIPQAGSPAAVPATSTTTATPATTGAAPAITLTSDVLRLKLDGRSVLDAELLQFPQTKDGTEPVKLLTEDAAHPYNATSGWASERSPVPGVGGFRAEQPGTTFELAKGQNTLVVPFVWNGPNGVSIRRIFTLQRGSYAISIKDEVINKSDAAWNGYVFRKLSRVPTILSRGMTNPDSFSFNGATWYSPQEGYERRAFKDYMDDGGLNRQITGGWVALLQHHFFTAWIPQKDQASLYVLAQDGPRDVAELRGPAFTVAPGQSASTEARLWVGPKLVSLLAKEDVKGLDRVVDYSRFSIMAIIGQGLFWVLSHLHSFLHNWGWAIIGLVVLLRLALYPLSAAQYKSGAKMRRFQPRLAQLKERYGDDRQKYQQATMELFKKEKINPMGGCLPLLIQMPIFFALYWVLVESVELRQAPWLGWIQDLTARDPYFILPVLNIAIMWATQKLTPTPGMDPMQAKMMQFMPLVFGVMMAFMPAGLVLYWVVNGGLGLLIQWWMIRQHGEKPSKIIQANAK</sequence>
<reference key="1">
    <citation type="journal article" date="2005" name="Genome Res.">
        <title>Comparative and functional genomic analyses of the pathogenicity of phytopathogen Xanthomonas campestris pv. campestris.</title>
        <authorList>
            <person name="Qian W."/>
            <person name="Jia Y."/>
            <person name="Ren S.-X."/>
            <person name="He Y.-Q."/>
            <person name="Feng J.-X."/>
            <person name="Lu L.-F."/>
            <person name="Sun Q."/>
            <person name="Ying G."/>
            <person name="Tang D.-J."/>
            <person name="Tang H."/>
            <person name="Wu W."/>
            <person name="Hao P."/>
            <person name="Wang L."/>
            <person name="Jiang B.-L."/>
            <person name="Zeng S."/>
            <person name="Gu W.-Y."/>
            <person name="Lu G."/>
            <person name="Rong L."/>
            <person name="Tian Y."/>
            <person name="Yao Z."/>
            <person name="Fu G."/>
            <person name="Chen B."/>
            <person name="Fang R."/>
            <person name="Qiang B."/>
            <person name="Chen Z."/>
            <person name="Zhao G.-P."/>
            <person name="Tang J.-L."/>
            <person name="He C."/>
        </authorList>
    </citation>
    <scope>NUCLEOTIDE SEQUENCE [LARGE SCALE GENOMIC DNA]</scope>
    <source>
        <strain>8004</strain>
    </source>
</reference>
<comment type="function">
    <text evidence="1">Required for the insertion and/or proper folding and/or complex formation of integral membrane proteins into the membrane. Involved in integration of membrane proteins that insert both dependently and independently of the Sec translocase complex, as well as at least some lipoproteins. Aids folding of multispanning membrane proteins.</text>
</comment>
<comment type="subunit">
    <text evidence="1">Interacts with the Sec translocase complex via SecD. Specifically interacts with transmembrane segments of nascent integral membrane proteins during membrane integration.</text>
</comment>
<comment type="subcellular location">
    <subcellularLocation>
        <location evidence="1">Cell inner membrane</location>
        <topology evidence="1">Multi-pass membrane protein</topology>
    </subcellularLocation>
</comment>
<comment type="similarity">
    <text evidence="1">Belongs to the OXA1/ALB3/YidC family. Type 1 subfamily.</text>
</comment>
<keyword id="KW-0997">Cell inner membrane</keyword>
<keyword id="KW-1003">Cell membrane</keyword>
<keyword id="KW-0143">Chaperone</keyword>
<keyword id="KW-0472">Membrane</keyword>
<keyword id="KW-0653">Protein transport</keyword>
<keyword id="KW-0812">Transmembrane</keyword>
<keyword id="KW-1133">Transmembrane helix</keyword>
<keyword id="KW-0813">Transport</keyword>
<accession>Q4UNK8</accession>
<dbReference type="EMBL" id="CP000050">
    <property type="protein sequence ID" value="AAY51365.1"/>
    <property type="molecule type" value="Genomic_DNA"/>
</dbReference>
<dbReference type="RefSeq" id="WP_011270118.1">
    <property type="nucleotide sequence ID" value="NC_007086.1"/>
</dbReference>
<dbReference type="SMR" id="Q4UNK8"/>
<dbReference type="KEGG" id="xcb:XC_4330"/>
<dbReference type="HOGENOM" id="CLU_016535_3_0_6"/>
<dbReference type="Proteomes" id="UP000000420">
    <property type="component" value="Chromosome"/>
</dbReference>
<dbReference type="GO" id="GO:0005886">
    <property type="term" value="C:plasma membrane"/>
    <property type="evidence" value="ECO:0007669"/>
    <property type="project" value="UniProtKB-SubCell"/>
</dbReference>
<dbReference type="GO" id="GO:0032977">
    <property type="term" value="F:membrane insertase activity"/>
    <property type="evidence" value="ECO:0007669"/>
    <property type="project" value="InterPro"/>
</dbReference>
<dbReference type="GO" id="GO:0051205">
    <property type="term" value="P:protein insertion into membrane"/>
    <property type="evidence" value="ECO:0007669"/>
    <property type="project" value="TreeGrafter"/>
</dbReference>
<dbReference type="GO" id="GO:0015031">
    <property type="term" value="P:protein transport"/>
    <property type="evidence" value="ECO:0007669"/>
    <property type="project" value="UniProtKB-KW"/>
</dbReference>
<dbReference type="CDD" id="cd20070">
    <property type="entry name" value="5TM_YidC_Alb3"/>
    <property type="match status" value="1"/>
</dbReference>
<dbReference type="CDD" id="cd19961">
    <property type="entry name" value="EcYidC-like_peri"/>
    <property type="match status" value="1"/>
</dbReference>
<dbReference type="Gene3D" id="2.70.98.90">
    <property type="match status" value="1"/>
</dbReference>
<dbReference type="HAMAP" id="MF_01810">
    <property type="entry name" value="YidC_type1"/>
    <property type="match status" value="1"/>
</dbReference>
<dbReference type="InterPro" id="IPR019998">
    <property type="entry name" value="Membr_insert_YidC"/>
</dbReference>
<dbReference type="InterPro" id="IPR028053">
    <property type="entry name" value="Membr_insert_YidC_N"/>
</dbReference>
<dbReference type="InterPro" id="IPR001708">
    <property type="entry name" value="YidC/ALB3/OXA1/COX18"/>
</dbReference>
<dbReference type="InterPro" id="IPR028055">
    <property type="entry name" value="YidC/Oxa/ALB_C"/>
</dbReference>
<dbReference type="InterPro" id="IPR047196">
    <property type="entry name" value="YidC_ALB_C"/>
</dbReference>
<dbReference type="InterPro" id="IPR038221">
    <property type="entry name" value="YidC_periplasmic_sf"/>
</dbReference>
<dbReference type="NCBIfam" id="NF002352">
    <property type="entry name" value="PRK01318.1-3"/>
    <property type="match status" value="1"/>
</dbReference>
<dbReference type="NCBIfam" id="TIGR03593">
    <property type="entry name" value="yidC_nterm"/>
    <property type="match status" value="1"/>
</dbReference>
<dbReference type="NCBIfam" id="TIGR03592">
    <property type="entry name" value="yidC_oxa1_cterm"/>
    <property type="match status" value="1"/>
</dbReference>
<dbReference type="PANTHER" id="PTHR12428:SF65">
    <property type="entry name" value="CYTOCHROME C OXIDASE ASSEMBLY PROTEIN COX18, MITOCHONDRIAL"/>
    <property type="match status" value="1"/>
</dbReference>
<dbReference type="PANTHER" id="PTHR12428">
    <property type="entry name" value="OXA1"/>
    <property type="match status" value="1"/>
</dbReference>
<dbReference type="Pfam" id="PF02096">
    <property type="entry name" value="60KD_IMP"/>
    <property type="match status" value="1"/>
</dbReference>
<dbReference type="Pfam" id="PF14849">
    <property type="entry name" value="YidC_periplas"/>
    <property type="match status" value="1"/>
</dbReference>
<dbReference type="PRINTS" id="PR00701">
    <property type="entry name" value="60KDINNERMP"/>
</dbReference>
<dbReference type="PRINTS" id="PR01900">
    <property type="entry name" value="YIDCPROTEIN"/>
</dbReference>
<feature type="chain" id="PRO_1000070189" description="Membrane protein insertase YidC">
    <location>
        <begin position="1"/>
        <end position="573"/>
    </location>
</feature>
<feature type="transmembrane region" description="Helical" evidence="1">
    <location>
        <begin position="6"/>
        <end position="26"/>
    </location>
</feature>
<feature type="transmembrane region" description="Helical" evidence="1">
    <location>
        <begin position="355"/>
        <end position="375"/>
    </location>
</feature>
<feature type="transmembrane region" description="Helical" evidence="1">
    <location>
        <begin position="379"/>
        <end position="399"/>
    </location>
</feature>
<feature type="transmembrane region" description="Helical" evidence="1">
    <location>
        <begin position="446"/>
        <end position="466"/>
    </location>
</feature>
<feature type="transmembrane region" description="Helical" evidence="1">
    <location>
        <begin position="488"/>
        <end position="508"/>
    </location>
</feature>
<feature type="transmembrane region" description="Helical" evidence="1">
    <location>
        <begin position="524"/>
        <end position="544"/>
    </location>
</feature>
<feature type="region of interest" description="Disordered" evidence="2">
    <location>
        <begin position="63"/>
        <end position="82"/>
    </location>
</feature>
<protein>
    <recommendedName>
        <fullName evidence="1">Membrane protein insertase YidC</fullName>
    </recommendedName>
    <alternativeName>
        <fullName evidence="1">Foldase YidC</fullName>
    </alternativeName>
    <alternativeName>
        <fullName evidence="1">Membrane integrase YidC</fullName>
    </alternativeName>
    <alternativeName>
        <fullName evidence="1">Membrane protein YidC</fullName>
    </alternativeName>
</protein>
<proteinExistence type="inferred from homology"/>
<name>YIDC_XANC8</name>
<organism>
    <name type="scientific">Xanthomonas campestris pv. campestris (strain 8004)</name>
    <dbReference type="NCBI Taxonomy" id="314565"/>
    <lineage>
        <taxon>Bacteria</taxon>
        <taxon>Pseudomonadati</taxon>
        <taxon>Pseudomonadota</taxon>
        <taxon>Gammaproteobacteria</taxon>
        <taxon>Lysobacterales</taxon>
        <taxon>Lysobacteraceae</taxon>
        <taxon>Xanthomonas</taxon>
    </lineage>
</organism>
<gene>
    <name evidence="1" type="primary">yidC</name>
    <name type="ordered locus">XC_4330</name>
</gene>
<evidence type="ECO:0000255" key="1">
    <source>
        <dbReference type="HAMAP-Rule" id="MF_01810"/>
    </source>
</evidence>
<evidence type="ECO:0000256" key="2">
    <source>
        <dbReference type="SAM" id="MobiDB-lite"/>
    </source>
</evidence>